<evidence type="ECO:0000250" key="1">
    <source>
        <dbReference type="UniProtKB" id="P04798"/>
    </source>
</evidence>
<evidence type="ECO:0000255" key="2"/>
<evidence type="ECO:0000255" key="3">
    <source>
        <dbReference type="PROSITE-ProRule" id="PRU00498"/>
    </source>
</evidence>
<evidence type="ECO:0000269" key="4">
    <source>
    </source>
</evidence>
<evidence type="ECO:0000269" key="5">
    <source>
    </source>
</evidence>
<evidence type="ECO:0000303" key="6">
    <source>
    </source>
</evidence>
<evidence type="ECO:0000303" key="7">
    <source>
    </source>
</evidence>
<evidence type="ECO:0000305" key="8"/>
<evidence type="ECO:0000305" key="9">
    <source>
    </source>
</evidence>
<evidence type="ECO:0000305" key="10">
    <source>
    </source>
</evidence>
<proteinExistence type="evidence at protein level"/>
<organism>
    <name type="scientific">Aspergillus terreus (strain NIH 2624 / FGSC A1156)</name>
    <dbReference type="NCBI Taxonomy" id="341663"/>
    <lineage>
        <taxon>Eukaryota</taxon>
        <taxon>Fungi</taxon>
        <taxon>Dikarya</taxon>
        <taxon>Ascomycota</taxon>
        <taxon>Pezizomycotina</taxon>
        <taxon>Eurotiomycetes</taxon>
        <taxon>Eurotiomycetidae</taxon>
        <taxon>Eurotiales</taxon>
        <taxon>Aspergillaceae</taxon>
        <taxon>Aspergillus</taxon>
        <taxon>Aspergillus subgen. Circumdati</taxon>
    </lineage>
</organism>
<feature type="chain" id="PRO_0000450609" description="Cytochrome P450 monooxygenase sttB">
    <location>
        <begin position="1"/>
        <end position="530"/>
    </location>
</feature>
<feature type="transmembrane region" description="Helical" evidence="2">
    <location>
        <begin position="24"/>
        <end position="44"/>
    </location>
</feature>
<feature type="glycosylation site" description="N-linked (GlcNAc...) asparagine" evidence="3">
    <location>
        <position position="5"/>
    </location>
</feature>
<feature type="glycosylation site" description="N-linked (GlcNAc...) asparagine" evidence="3">
    <location>
        <position position="230"/>
    </location>
</feature>
<accession>Q0CRW7</accession>
<reference key="1">
    <citation type="submission" date="2005-09" db="EMBL/GenBank/DDBJ databases">
        <title>Annotation of the Aspergillus terreus NIH2624 genome.</title>
        <authorList>
            <person name="Birren B.W."/>
            <person name="Lander E.S."/>
            <person name="Galagan J.E."/>
            <person name="Nusbaum C."/>
            <person name="Devon K."/>
            <person name="Henn M."/>
            <person name="Ma L.-J."/>
            <person name="Jaffe D.B."/>
            <person name="Butler J."/>
            <person name="Alvarez P."/>
            <person name="Gnerre S."/>
            <person name="Grabherr M."/>
            <person name="Kleber M."/>
            <person name="Mauceli E.W."/>
            <person name="Brockman W."/>
            <person name="Rounsley S."/>
            <person name="Young S.K."/>
            <person name="LaButti K."/>
            <person name="Pushparaj V."/>
            <person name="DeCaprio D."/>
            <person name="Crawford M."/>
            <person name="Koehrsen M."/>
            <person name="Engels R."/>
            <person name="Montgomery P."/>
            <person name="Pearson M."/>
            <person name="Howarth C."/>
            <person name="Larson L."/>
            <person name="Luoma S."/>
            <person name="White J."/>
            <person name="Alvarado L."/>
            <person name="Kodira C.D."/>
            <person name="Zeng Q."/>
            <person name="Oleary S."/>
            <person name="Yandava C."/>
            <person name="Denning D.W."/>
            <person name="Nierman W.C."/>
            <person name="Milne T."/>
            <person name="Madden K."/>
        </authorList>
    </citation>
    <scope>NUCLEOTIDE SEQUENCE [LARGE SCALE GENOMIC DNA]</scope>
    <source>
        <strain>NIH 2624 / FGSC A1156</strain>
    </source>
</reference>
<reference key="2">
    <citation type="journal article" date="2017" name="Nat. Chem. Biol.">
        <title>A scalable platform to identify fungal secondary metabolites and their gene clusters.</title>
        <authorList>
            <person name="Clevenger K.D."/>
            <person name="Bok J.W."/>
            <person name="Ye R."/>
            <person name="Miley G.P."/>
            <person name="Verdan M.H."/>
            <person name="Velk T."/>
            <person name="Chen C."/>
            <person name="Yang K."/>
            <person name="Robey M.T."/>
            <person name="Gao P."/>
            <person name="Lamprecht M."/>
            <person name="Thomas P.M."/>
            <person name="Islam M.N."/>
            <person name="Palmer J.M."/>
            <person name="Wu C.C."/>
            <person name="Keller N.P."/>
            <person name="Kelleher N.L."/>
        </authorList>
    </citation>
    <scope>FUNCTION</scope>
    <scope>DISRUPTION PHENOTYPE</scope>
    <scope>PATHWAY</scope>
</reference>
<reference key="3">
    <citation type="journal article" date="2021" name="Org. Lett.">
        <title>Genome-based discovery of enantiomeric pentacyclic sesterterpenes catalyzed by fungal bifunctional terpene synthases.</title>
        <authorList>
            <person name="Jiang L."/>
            <person name="Zhang X."/>
            <person name="Sato Y."/>
            <person name="Zhu G."/>
            <person name="Minami A."/>
            <person name="Zhang W."/>
            <person name="Ozaki T."/>
            <person name="Zhu B."/>
            <person name="Wang Z."/>
            <person name="Wang X."/>
            <person name="Lv K."/>
            <person name="Zhang J."/>
            <person name="Wang Y."/>
            <person name="Gao S."/>
            <person name="Liu C."/>
            <person name="Hsiang T."/>
            <person name="Zhang L."/>
            <person name="Oikawa H."/>
            <person name="Liu X."/>
        </authorList>
    </citation>
    <scope>FUNCTION</scope>
    <scope>CATALYTIC ACTIVITY</scope>
    <scope>PATHWAY</scope>
</reference>
<dbReference type="EC" id="1.-.-.-" evidence="9"/>
<dbReference type="EMBL" id="CH476597">
    <property type="protein sequence ID" value="EAU36841.1"/>
    <property type="status" value="ALT_SEQ"/>
    <property type="molecule type" value="Genomic_DNA"/>
</dbReference>
<dbReference type="RefSeq" id="XP_001212745.1">
    <property type="nucleotide sequence ID" value="XM_001212745.1"/>
</dbReference>
<dbReference type="SMR" id="Q0CRW7"/>
<dbReference type="STRING" id="341663.Q0CRW7"/>
<dbReference type="GlyCosmos" id="Q0CRW7">
    <property type="glycosylation" value="2 sites, No reported glycans"/>
</dbReference>
<dbReference type="EnsemblFungi" id="EAU36841">
    <property type="protein sequence ID" value="EAU36841"/>
    <property type="gene ID" value="ATEG_03567"/>
</dbReference>
<dbReference type="GeneID" id="4317925"/>
<dbReference type="eggNOG" id="KOG0157">
    <property type="taxonomic scope" value="Eukaryota"/>
</dbReference>
<dbReference type="HOGENOM" id="CLU_022195_1_0_1"/>
<dbReference type="OrthoDB" id="1844152at2759"/>
<dbReference type="UniPathway" id="UPA00213"/>
<dbReference type="Proteomes" id="UP000007963">
    <property type="component" value="Unassembled WGS sequence"/>
</dbReference>
<dbReference type="GO" id="GO:0016020">
    <property type="term" value="C:membrane"/>
    <property type="evidence" value="ECO:0007669"/>
    <property type="project" value="UniProtKB-SubCell"/>
</dbReference>
<dbReference type="GO" id="GO:0020037">
    <property type="term" value="F:heme binding"/>
    <property type="evidence" value="ECO:0007669"/>
    <property type="project" value="InterPro"/>
</dbReference>
<dbReference type="GO" id="GO:0005506">
    <property type="term" value="F:iron ion binding"/>
    <property type="evidence" value="ECO:0007669"/>
    <property type="project" value="InterPro"/>
</dbReference>
<dbReference type="GO" id="GO:0004497">
    <property type="term" value="F:monooxygenase activity"/>
    <property type="evidence" value="ECO:0007669"/>
    <property type="project" value="UniProtKB-KW"/>
</dbReference>
<dbReference type="GO" id="GO:0016705">
    <property type="term" value="F:oxidoreductase activity, acting on paired donors, with incorporation or reduction of molecular oxygen"/>
    <property type="evidence" value="ECO:0007669"/>
    <property type="project" value="InterPro"/>
</dbReference>
<dbReference type="GO" id="GO:0019748">
    <property type="term" value="P:secondary metabolic process"/>
    <property type="evidence" value="ECO:0007669"/>
    <property type="project" value="UniProtKB-ARBA"/>
</dbReference>
<dbReference type="GO" id="GO:0016114">
    <property type="term" value="P:terpenoid biosynthetic process"/>
    <property type="evidence" value="ECO:0007669"/>
    <property type="project" value="UniProtKB-UniPathway"/>
</dbReference>
<dbReference type="CDD" id="cd11041">
    <property type="entry name" value="CYP503A1-like"/>
    <property type="match status" value="1"/>
</dbReference>
<dbReference type="Gene3D" id="1.10.630.10">
    <property type="entry name" value="Cytochrome P450"/>
    <property type="match status" value="1"/>
</dbReference>
<dbReference type="InterPro" id="IPR001128">
    <property type="entry name" value="Cyt_P450"/>
</dbReference>
<dbReference type="InterPro" id="IPR002403">
    <property type="entry name" value="Cyt_P450_E_grp-IV"/>
</dbReference>
<dbReference type="InterPro" id="IPR036396">
    <property type="entry name" value="Cyt_P450_sf"/>
</dbReference>
<dbReference type="PANTHER" id="PTHR46206">
    <property type="entry name" value="CYTOCHROME P450"/>
    <property type="match status" value="1"/>
</dbReference>
<dbReference type="PANTHER" id="PTHR46206:SF5">
    <property type="entry name" value="P450, PUTATIVE (EUROFUNG)-RELATED"/>
    <property type="match status" value="1"/>
</dbReference>
<dbReference type="Pfam" id="PF00067">
    <property type="entry name" value="p450"/>
    <property type="match status" value="1"/>
</dbReference>
<dbReference type="PRINTS" id="PR00465">
    <property type="entry name" value="EP450IV"/>
</dbReference>
<dbReference type="SUPFAM" id="SSF48264">
    <property type="entry name" value="Cytochrome P450"/>
    <property type="match status" value="1"/>
</dbReference>
<comment type="function">
    <text evidence="4 5 10">Cytochrome P450 monooxygenase; part of the gene cluster that mediates the biosynthesis of aspterpenacids (PubMed:28604695, PubMed:34085529). Performs the C22-oxidative modification of the terpene synthase sttA product preaspterpenacid I to produce preaspterpenacid II (PubMed:34085529). It has still to be determined how preaspterpenacid II is further modified to produce aspterpenacids (Probable).</text>
</comment>
<comment type="catalytic activity">
    <reaction evidence="5">
        <text>preaspterpenacid acid I + reduced [NADPH--hemoprotein reductase] + O2 = preaspterpenacid acid II + oxidized [NADPH--hemoprotein reductase] + H2O + H(+)</text>
        <dbReference type="Rhea" id="RHEA:71999"/>
        <dbReference type="Rhea" id="RHEA-COMP:11964"/>
        <dbReference type="Rhea" id="RHEA-COMP:11965"/>
        <dbReference type="ChEBI" id="CHEBI:15377"/>
        <dbReference type="ChEBI" id="CHEBI:15378"/>
        <dbReference type="ChEBI" id="CHEBI:15379"/>
        <dbReference type="ChEBI" id="CHEBI:57618"/>
        <dbReference type="ChEBI" id="CHEBI:58210"/>
        <dbReference type="ChEBI" id="CHEBI:191389"/>
        <dbReference type="ChEBI" id="CHEBI:191390"/>
    </reaction>
    <physiologicalReaction direction="left-to-right" evidence="5">
        <dbReference type="Rhea" id="RHEA:72000"/>
    </physiologicalReaction>
</comment>
<comment type="cofactor">
    <cofactor evidence="1">
        <name>heme</name>
        <dbReference type="ChEBI" id="CHEBI:30413"/>
    </cofactor>
</comment>
<comment type="pathway">
    <text evidence="4 5">Secondary metabolite biosynthesis; terpenoid biosynthesis.</text>
</comment>
<comment type="subcellular location">
    <subcellularLocation>
        <location evidence="2">Membrane</location>
        <topology evidence="2">Single-pass membrane protein</topology>
    </subcellularLocation>
</comment>
<comment type="disruption phenotype">
    <text evidence="4">Abolishes the production of the ophiobolin family sesterterpenoid.</text>
</comment>
<comment type="similarity">
    <text evidence="8">Belongs to the cytochrome P450 family.</text>
</comment>
<comment type="sequence caution" evidence="8">
    <conflict type="erroneous gene model prediction">
        <sequence resource="EMBL-CDS" id="EAU36841"/>
    </conflict>
</comment>
<keyword id="KW-0325">Glycoprotein</keyword>
<keyword id="KW-0349">Heme</keyword>
<keyword id="KW-0408">Iron</keyword>
<keyword id="KW-0472">Membrane</keyword>
<keyword id="KW-0479">Metal-binding</keyword>
<keyword id="KW-0503">Monooxygenase</keyword>
<keyword id="KW-0560">Oxidoreductase</keyword>
<keyword id="KW-1185">Reference proteome</keyword>
<keyword id="KW-0812">Transmembrane</keyword>
<keyword id="KW-1133">Transmembrane helix</keyword>
<sequence>MSISNMTSTVWPDLQVPAIEHNHLPILTVALLTGIASAVYINVSSVQDPCKVGSIPTVKRPRLLDAYRSGVWWRIFVPRLVPYIEEGYHKYNKNDQPFRIWLGGFQAYAYVLPERYLDKIKNMPESEASFAAMANKYFHTGLPTGEVNNLVLQVASKLVNGNLATIKTLMQGEVQKALAREIGSPRQWTKINAWQVARKTTEAPGLRVVFGEELANDKTFVTGVSEFVSNITVYAFTLRYINLGPLRDFILYLVHWRHRRSLPAVLTPLNNVITERKKVRSNRHISDDEESFDCIQWALDQPVSDDCKTAEAIARRLVVISLGTIDTVAGVLVKQLTHLASHPECHEEIRAEIRECLAEDDNGWTLKSTGRMKKLESFIQESLRMSSGAISLSGMRIVTGSGFRLDDNTVLPRDSFIAIPTRNILYDPEVFPEPEKFDPFRFYKIKEDEKNAGSRSNRRDIRASWLAFGYGRQACPGRFYAINAMKTILGEILLKYDIRLAEKQAPRIDIDLDPMLAPVRSTDLEFRVRA</sequence>
<name>STTB_ASPTN</name>
<protein>
    <recommendedName>
        <fullName evidence="6">Cytochrome P450 monooxygenase sttB</fullName>
        <ecNumber evidence="9">1.-.-.-</ecNumber>
    </recommendedName>
    <alternativeName>
        <fullName evidence="7">Aspterpenacid biosynthesis cluster protein sttB</fullName>
    </alternativeName>
    <alternativeName>
        <fullName evidence="6">Ophiobolin family sesterterpenoid biosynthesis cluster protein B</fullName>
    </alternativeName>
</protein>
<gene>
    <name evidence="6" type="primary">sttB</name>
    <name type="ORF">ATEG_03567</name>
</gene>